<organism>
    <name type="scientific">Arabidopsis thaliana</name>
    <name type="common">Mouse-ear cress</name>
    <dbReference type="NCBI Taxonomy" id="3702"/>
    <lineage>
        <taxon>Eukaryota</taxon>
        <taxon>Viridiplantae</taxon>
        <taxon>Streptophyta</taxon>
        <taxon>Embryophyta</taxon>
        <taxon>Tracheophyta</taxon>
        <taxon>Spermatophyta</taxon>
        <taxon>Magnoliopsida</taxon>
        <taxon>eudicotyledons</taxon>
        <taxon>Gunneridae</taxon>
        <taxon>Pentapetalae</taxon>
        <taxon>rosids</taxon>
        <taxon>malvids</taxon>
        <taxon>Brassicales</taxon>
        <taxon>Brassicaceae</taxon>
        <taxon>Camelineae</taxon>
        <taxon>Arabidopsis</taxon>
    </lineage>
</organism>
<name>IRM1_ARATH</name>
<comment type="function">
    <text evidence="3">May act as an adapter to facilitate the interaction of SnRK1 complex with effector proteins, conferring tissue- and stimulus-type specific differences in the SnRK1 regulation pathway.</text>
</comment>
<comment type="subunit">
    <text evidence="3 5">Interacts with KIN10 and KIN11 via its FLZ-type zinc finger domain (PubMed:24600465, PubMed:29945970). Interacts with KINB3 via its N-terminal part (PubMed:29945970). Interacts with GEBP (PubMed:24600465).</text>
</comment>
<comment type="subcellular location">
    <subcellularLocation>
        <location evidence="3 5">Nucleus</location>
    </subcellularLocation>
    <subcellularLocation>
        <location evidence="3 5">Cytoplasm</location>
    </subcellularLocation>
    <text evidence="3">Shuttles from the cytoplasm to the nucleus when associated with KIN10.</text>
</comment>
<comment type="induction">
    <text evidence="4">Up-regulated in response to mild as well as prolonged energy depletion.</text>
</comment>
<comment type="disruption phenotype">
    <text evidence="2">Promoted M.persicae aphid population development.</text>
</comment>
<comment type="miscellaneous">
    <text evidence="2">Overexpression of FLZ4/IRM1 rendered plants shorter which creates mechanical resistance to M.persicae aphid attack.</text>
</comment>
<comment type="similarity">
    <text evidence="9">Belongs to the FLZ family.</text>
</comment>
<protein>
    <recommendedName>
        <fullName evidence="6">Protein INCREASED RESISTANCE TO MYZUS PERSICAE 1</fullName>
    </recommendedName>
    <alternativeName>
        <fullName evidence="8">FCS-Like Zinc finger 4</fullName>
    </alternativeName>
</protein>
<gene>
    <name evidence="6" type="primary">IRM1</name>
    <name evidence="7" type="synonym">DUF581-18</name>
    <name evidence="8" type="synonym">FLZ4</name>
    <name evidence="10" type="ordered locus">At5g65040</name>
    <name evidence="11" type="ORF">MXK3.29</name>
</gene>
<accession>Q9LV75</accession>
<keyword id="KW-0963">Cytoplasm</keyword>
<keyword id="KW-0479">Metal-binding</keyword>
<keyword id="KW-0539">Nucleus</keyword>
<keyword id="KW-0611">Plant defense</keyword>
<keyword id="KW-1185">Reference proteome</keyword>
<keyword id="KW-0862">Zinc</keyword>
<keyword id="KW-0863">Zinc-finger</keyword>
<proteinExistence type="evidence at protein level"/>
<dbReference type="EMBL" id="AB019236">
    <property type="protein sequence ID" value="BAA97316.1"/>
    <property type="molecule type" value="Genomic_DNA"/>
</dbReference>
<dbReference type="EMBL" id="CP002688">
    <property type="protein sequence ID" value="AED97989.1"/>
    <property type="molecule type" value="Genomic_DNA"/>
</dbReference>
<dbReference type="EMBL" id="BT002778">
    <property type="protein sequence ID" value="AAO22606.1"/>
    <property type="molecule type" value="mRNA"/>
</dbReference>
<dbReference type="EMBL" id="BT004359">
    <property type="protein sequence ID" value="AAO42353.1"/>
    <property type="molecule type" value="mRNA"/>
</dbReference>
<dbReference type="EMBL" id="AY086426">
    <property type="protein sequence ID" value="AAM63428.1"/>
    <property type="molecule type" value="mRNA"/>
</dbReference>
<dbReference type="RefSeq" id="NP_201309.1">
    <property type="nucleotide sequence ID" value="NM_125903.3"/>
</dbReference>
<dbReference type="FunCoup" id="Q9LV75">
    <property type="interactions" value="1"/>
</dbReference>
<dbReference type="IntAct" id="Q9LV75">
    <property type="interactions" value="1"/>
</dbReference>
<dbReference type="STRING" id="3702.Q9LV75"/>
<dbReference type="PaxDb" id="3702-AT5G65040.1"/>
<dbReference type="EnsemblPlants" id="AT5G65040.1">
    <property type="protein sequence ID" value="AT5G65040.1"/>
    <property type="gene ID" value="AT5G65040"/>
</dbReference>
<dbReference type="GeneID" id="836628"/>
<dbReference type="Gramene" id="AT5G65040.1">
    <property type="protein sequence ID" value="AT5G65040.1"/>
    <property type="gene ID" value="AT5G65040"/>
</dbReference>
<dbReference type="KEGG" id="ath:AT5G65040"/>
<dbReference type="Araport" id="AT5G65040"/>
<dbReference type="TAIR" id="AT5G65040">
    <property type="gene designation" value="IRM1"/>
</dbReference>
<dbReference type="eggNOG" id="ENOG502R1MD">
    <property type="taxonomic scope" value="Eukaryota"/>
</dbReference>
<dbReference type="HOGENOM" id="CLU_085535_1_0_1"/>
<dbReference type="InParanoid" id="Q9LV75"/>
<dbReference type="OMA" id="CHHRDIY"/>
<dbReference type="OrthoDB" id="1925036at2759"/>
<dbReference type="PhylomeDB" id="Q9LV75"/>
<dbReference type="PRO" id="PR:Q9LV75"/>
<dbReference type="Proteomes" id="UP000006548">
    <property type="component" value="Chromosome 5"/>
</dbReference>
<dbReference type="ExpressionAtlas" id="Q9LV75">
    <property type="expression patterns" value="baseline and differential"/>
</dbReference>
<dbReference type="GO" id="GO:0005737">
    <property type="term" value="C:cytoplasm"/>
    <property type="evidence" value="ECO:0000314"/>
    <property type="project" value="UniProtKB"/>
</dbReference>
<dbReference type="GO" id="GO:0005829">
    <property type="term" value="C:cytosol"/>
    <property type="evidence" value="ECO:0000314"/>
    <property type="project" value="UniProtKB"/>
</dbReference>
<dbReference type="GO" id="GO:0005634">
    <property type="term" value="C:nucleus"/>
    <property type="evidence" value="ECO:0000314"/>
    <property type="project" value="UniProtKB"/>
</dbReference>
<dbReference type="GO" id="GO:0019900">
    <property type="term" value="F:kinase binding"/>
    <property type="evidence" value="ECO:0000353"/>
    <property type="project" value="UniProtKB"/>
</dbReference>
<dbReference type="GO" id="GO:0008270">
    <property type="term" value="F:zinc ion binding"/>
    <property type="evidence" value="ECO:0007669"/>
    <property type="project" value="UniProtKB-KW"/>
</dbReference>
<dbReference type="GO" id="GO:0002213">
    <property type="term" value="P:defense response to insect"/>
    <property type="evidence" value="ECO:0000315"/>
    <property type="project" value="UniProtKB"/>
</dbReference>
<dbReference type="GO" id="GO:0009625">
    <property type="term" value="P:response to insect"/>
    <property type="evidence" value="ECO:0000270"/>
    <property type="project" value="UniProtKB"/>
</dbReference>
<dbReference type="GO" id="GO:0042594">
    <property type="term" value="P:response to starvation"/>
    <property type="evidence" value="ECO:0000270"/>
    <property type="project" value="UniProtKB"/>
</dbReference>
<dbReference type="InterPro" id="IPR007650">
    <property type="entry name" value="Zf-FLZ_dom"/>
</dbReference>
<dbReference type="PANTHER" id="PTHR33059">
    <property type="entry name" value="FCS-LIKE ZINC FINGER 5"/>
    <property type="match status" value="1"/>
</dbReference>
<dbReference type="PANTHER" id="PTHR33059:SF102">
    <property type="entry name" value="PROTEIN INCREASED RESISTANCE TO MYZUS PERSICAE 1"/>
    <property type="match status" value="1"/>
</dbReference>
<dbReference type="Pfam" id="PF04570">
    <property type="entry name" value="zf-FLZ"/>
    <property type="match status" value="1"/>
</dbReference>
<dbReference type="PROSITE" id="PS51795">
    <property type="entry name" value="ZF_FLZ"/>
    <property type="match status" value="1"/>
</dbReference>
<evidence type="ECO:0000255" key="1">
    <source>
        <dbReference type="PROSITE-ProRule" id="PRU01131"/>
    </source>
</evidence>
<evidence type="ECO:0000269" key="2">
    <source>
    </source>
</evidence>
<evidence type="ECO:0000269" key="3">
    <source>
    </source>
</evidence>
<evidence type="ECO:0000269" key="4">
    <source>
    </source>
</evidence>
<evidence type="ECO:0000269" key="5">
    <source>
    </source>
</evidence>
<evidence type="ECO:0000303" key="6">
    <source>
    </source>
</evidence>
<evidence type="ECO:0000303" key="7">
    <source>
    </source>
</evidence>
<evidence type="ECO:0000303" key="8">
    <source>
    </source>
</evidence>
<evidence type="ECO:0000305" key="9"/>
<evidence type="ECO:0000312" key="10">
    <source>
        <dbReference type="Araport" id="AT5G65040"/>
    </source>
</evidence>
<evidence type="ECO:0000312" key="11">
    <source>
        <dbReference type="EMBL" id="BAA97316.1"/>
    </source>
</evidence>
<reference key="1">
    <citation type="journal article" date="2000" name="DNA Res.">
        <title>Structural analysis of Arabidopsis thaliana chromosome 5. X. Sequence features of the regions of 3,076,755 bp covered by sixty P1 and TAC clones.</title>
        <authorList>
            <person name="Sato S."/>
            <person name="Nakamura Y."/>
            <person name="Kaneko T."/>
            <person name="Katoh T."/>
            <person name="Asamizu E."/>
            <person name="Kotani H."/>
            <person name="Tabata S."/>
        </authorList>
    </citation>
    <scope>NUCLEOTIDE SEQUENCE [LARGE SCALE GENOMIC DNA]</scope>
    <source>
        <strain>cv. Columbia</strain>
    </source>
</reference>
<reference key="2">
    <citation type="journal article" date="2017" name="Plant J.">
        <title>Araport11: a complete reannotation of the Arabidopsis thaliana reference genome.</title>
        <authorList>
            <person name="Cheng C.Y."/>
            <person name="Krishnakumar V."/>
            <person name="Chan A.P."/>
            <person name="Thibaud-Nissen F."/>
            <person name="Schobel S."/>
            <person name="Town C.D."/>
        </authorList>
    </citation>
    <scope>GENOME REANNOTATION</scope>
    <source>
        <strain>cv. Columbia</strain>
    </source>
</reference>
<reference key="3">
    <citation type="journal article" date="2003" name="Science">
        <title>Empirical analysis of transcriptional activity in the Arabidopsis genome.</title>
        <authorList>
            <person name="Yamada K."/>
            <person name="Lim J."/>
            <person name="Dale J.M."/>
            <person name="Chen H."/>
            <person name="Shinn P."/>
            <person name="Palm C.J."/>
            <person name="Southwick A.M."/>
            <person name="Wu H.C."/>
            <person name="Kim C.J."/>
            <person name="Nguyen M."/>
            <person name="Pham P.K."/>
            <person name="Cheuk R.F."/>
            <person name="Karlin-Newmann G."/>
            <person name="Liu S.X."/>
            <person name="Lam B."/>
            <person name="Sakano H."/>
            <person name="Wu T."/>
            <person name="Yu G."/>
            <person name="Miranda M."/>
            <person name="Quach H.L."/>
            <person name="Tripp M."/>
            <person name="Chang C.H."/>
            <person name="Lee J.M."/>
            <person name="Toriumi M.J."/>
            <person name="Chan M.M."/>
            <person name="Tang C.C."/>
            <person name="Onodera C.S."/>
            <person name="Deng J.M."/>
            <person name="Akiyama K."/>
            <person name="Ansari Y."/>
            <person name="Arakawa T."/>
            <person name="Banh J."/>
            <person name="Banno F."/>
            <person name="Bowser L."/>
            <person name="Brooks S.Y."/>
            <person name="Carninci P."/>
            <person name="Chao Q."/>
            <person name="Choy N."/>
            <person name="Enju A."/>
            <person name="Goldsmith A.D."/>
            <person name="Gurjal M."/>
            <person name="Hansen N.F."/>
            <person name="Hayashizaki Y."/>
            <person name="Johnson-Hopson C."/>
            <person name="Hsuan V.W."/>
            <person name="Iida K."/>
            <person name="Karnes M."/>
            <person name="Khan S."/>
            <person name="Koesema E."/>
            <person name="Ishida J."/>
            <person name="Jiang P.X."/>
            <person name="Jones T."/>
            <person name="Kawai J."/>
            <person name="Kamiya A."/>
            <person name="Meyers C."/>
            <person name="Nakajima M."/>
            <person name="Narusaka M."/>
            <person name="Seki M."/>
            <person name="Sakurai T."/>
            <person name="Satou M."/>
            <person name="Tamse R."/>
            <person name="Vaysberg M."/>
            <person name="Wallender E.K."/>
            <person name="Wong C."/>
            <person name="Yamamura Y."/>
            <person name="Yuan S."/>
            <person name="Shinozaki K."/>
            <person name="Davis R.W."/>
            <person name="Theologis A."/>
            <person name="Ecker J.R."/>
        </authorList>
    </citation>
    <scope>NUCLEOTIDE SEQUENCE [LARGE SCALE MRNA]</scope>
    <source>
        <strain>cv. Columbia</strain>
    </source>
</reference>
<reference key="4">
    <citation type="submission" date="2002-03" db="EMBL/GenBank/DDBJ databases">
        <title>Full-length cDNA from Arabidopsis thaliana.</title>
        <authorList>
            <person name="Brover V.V."/>
            <person name="Troukhan M.E."/>
            <person name="Alexandrov N.A."/>
            <person name="Lu Y.-P."/>
            <person name="Flavell R.B."/>
            <person name="Feldmann K.A."/>
        </authorList>
    </citation>
    <scope>NUCLEOTIDE SEQUENCE [LARGE SCALE MRNA]</scope>
</reference>
<reference key="5">
    <citation type="journal article" date="2013" name="PLoS ONE">
        <title>Overexpression of IRM1 enhances resistance to aphids in Arabidopsis thaliana.</title>
        <authorList>
            <person name="Chen X."/>
            <person name="Zhang Z."/>
            <person name="Visser R.G."/>
            <person name="Broekgaarden C."/>
            <person name="Vosman B."/>
        </authorList>
    </citation>
    <scope>DISRUPTION PHENOTYPE</scope>
</reference>
<reference key="6">
    <citation type="journal article" date="2014" name="Front. Plant Sci.">
        <title>The complex becomes more complex: protein-protein interactions of SnRK1 with DUF581 family proteins provide a framework for cell- and stimulus type-specific SnRK1 signaling in plants.</title>
        <authorList>
            <person name="Nietzsche M."/>
            <person name="Schiessl I."/>
            <person name="Boernke F."/>
        </authorList>
    </citation>
    <scope>GENE FAMILY</scope>
    <scope>INTERACTION WITH KIN10; KIN11 AND GEBP</scope>
    <scope>SUBCELLULAR LOCATION</scope>
    <scope>FUNCTION</scope>
</reference>
<reference key="7">
    <citation type="journal article" date="2014" name="Front. Plant Sci.">
        <title>Corrigendum: The complex becomes more complex: protein-protein interactions of SnRK1 with DUF581 family proteins provide a framework for cell- and stimulus type-specific SnRK1 signaling in plants.</title>
        <authorList>
            <person name="Boernke F."/>
        </authorList>
    </citation>
    <scope>ERRATUM OF PUBMED:24600465</scope>
</reference>
<reference key="8">
    <citation type="journal article" date="2014" name="PLoS ONE">
        <title>DUF581 is plant specific FCS-like zinc finger involved in protein-protein interaction.</title>
        <authorList>
            <person name="Jamsheer K M."/>
            <person name="Laxmi A."/>
        </authorList>
    </citation>
    <scope>GENE FAMILY</scope>
    <scope>NOMENCLATURE</scope>
</reference>
<reference key="9">
    <citation type="journal article" date="2015" name="Front. Plant Sci.">
        <title>Expression of Arabidopsis FCS-Like Zinc finger genes is differentially regulated by sugars, cellular energy level, and abiotic stress.</title>
        <authorList>
            <person name="Jamsheer K M."/>
            <person name="Laxmi A."/>
        </authorList>
    </citation>
    <scope>INDUCTION</scope>
</reference>
<reference key="10">
    <citation type="journal article" date="2018" name="J. Biol. Chem.">
        <title>The FCS-like zinc finger scaffold of the kinase SnRK1 is formed by the coordinated actions of the FLZ domain and intrinsically disordered regions.</title>
        <authorList>
            <person name="Jamsheer K M."/>
            <person name="Shukla B.N."/>
            <person name="Jindal S."/>
            <person name="Gopan N."/>
            <person name="Mannully C.T."/>
            <person name="Laxmi A."/>
        </authorList>
    </citation>
    <scope>INTERACTION WITH KIN10; KIN11 AND KINB3</scope>
    <scope>SUBCELLULAR LOCATION</scope>
</reference>
<sequence>MVLGKRHGSLIKRTTSMKMITLDTPTIYDASQPSDHLTFHQHPHNPMVVMASNYDDFLKTCSLCNRSLCHHRDIYMYRGNNAFCSLECREKQIKLDEKKAKTGFVTSKKPIRI</sequence>
<feature type="chain" id="PRO_0000445495" description="Protein INCREASED RESISTANCE TO MYZUS PERSICAE 1">
    <location>
        <begin position="1"/>
        <end position="113"/>
    </location>
</feature>
<feature type="zinc finger region" description="FLZ-type" evidence="1">
    <location>
        <begin position="56"/>
        <end position="100"/>
    </location>
</feature>